<comment type="function">
    <text evidence="1">Probably mediates the hydrolysis of some nucleoside diphosphate derivatives.</text>
</comment>
<comment type="cofactor">
    <cofactor evidence="1">
        <name>Mn(2+)</name>
        <dbReference type="ChEBI" id="CHEBI:29035"/>
    </cofactor>
    <cofactor evidence="1">
        <name>Mg(2+)</name>
        <dbReference type="ChEBI" id="CHEBI:18420"/>
    </cofactor>
</comment>
<comment type="similarity">
    <text evidence="1">Belongs to the Nudix hydrolase family. PCD1 subfamily.</text>
</comment>
<gene>
    <name evidence="1" type="primary">nudL</name>
    <name type="ordered locus">Ecok1_16770</name>
    <name type="ORF">APECO1_870</name>
</gene>
<reference key="1">
    <citation type="journal article" date="2007" name="J. Bacteriol.">
        <title>The genome sequence of avian pathogenic Escherichia coli strain O1:K1:H7 shares strong similarities with human extraintestinal pathogenic E. coli genomes.</title>
        <authorList>
            <person name="Johnson T.J."/>
            <person name="Kariyawasam S."/>
            <person name="Wannemuehler Y."/>
            <person name="Mangiamele P."/>
            <person name="Johnson S.J."/>
            <person name="Doetkott C."/>
            <person name="Skyberg J.A."/>
            <person name="Lynne A.M."/>
            <person name="Johnson J.R."/>
            <person name="Nolan L.K."/>
        </authorList>
    </citation>
    <scope>NUCLEOTIDE SEQUENCE [LARGE SCALE GENOMIC DNA]</scope>
</reference>
<protein>
    <recommendedName>
        <fullName evidence="1">Uncharacterized Nudix hydrolase NudL</fullName>
        <ecNumber evidence="1">3.6.1.-</ecNumber>
    </recommendedName>
</protein>
<proteinExistence type="inferred from homology"/>
<sequence length="192" mass="21464">MEYRSLTLDDFLSRFQLLRPQINRETLNHRQAAVLIPIVRRPQPGLLLTQRSIHLRKHAGQVAFPGGAVDDTDASVIAAALREAEEEVAIPPSAVEVIGVLPPVDSVTGYQVTPVVGIIPPDLPYRASEDEVSAVFEMPLAQALHLGRYHPLDIYRRGDSHRVWLSWYEQYFVWGMTAGIIRELALQIGVKP</sequence>
<accession>A1ABY1</accession>
<dbReference type="EC" id="3.6.1.-" evidence="1"/>
<dbReference type="EMBL" id="CP000468">
    <property type="protein sequence ID" value="ABJ01171.1"/>
    <property type="molecule type" value="Genomic_DNA"/>
</dbReference>
<dbReference type="RefSeq" id="WP_000456725.1">
    <property type="nucleotide sequence ID" value="NZ_CADILS010000034.1"/>
</dbReference>
<dbReference type="SMR" id="A1ABY1"/>
<dbReference type="KEGG" id="ecv:APECO1_870"/>
<dbReference type="HOGENOM" id="CLU_040940_5_2_6"/>
<dbReference type="Proteomes" id="UP000008216">
    <property type="component" value="Chromosome"/>
</dbReference>
<dbReference type="GO" id="GO:0010945">
    <property type="term" value="F:coenzyme A diphosphatase activity"/>
    <property type="evidence" value="ECO:0007669"/>
    <property type="project" value="InterPro"/>
</dbReference>
<dbReference type="GO" id="GO:0000287">
    <property type="term" value="F:magnesium ion binding"/>
    <property type="evidence" value="ECO:0007669"/>
    <property type="project" value="UniProtKB-UniRule"/>
</dbReference>
<dbReference type="GO" id="GO:0030145">
    <property type="term" value="F:manganese ion binding"/>
    <property type="evidence" value="ECO:0007669"/>
    <property type="project" value="UniProtKB-UniRule"/>
</dbReference>
<dbReference type="GO" id="GO:0009132">
    <property type="term" value="P:nucleoside diphosphate metabolic process"/>
    <property type="evidence" value="ECO:0007669"/>
    <property type="project" value="InterPro"/>
</dbReference>
<dbReference type="CDD" id="cd03426">
    <property type="entry name" value="NUDIX_CoAse_Nudt7"/>
    <property type="match status" value="1"/>
</dbReference>
<dbReference type="FunFam" id="3.90.79.10:FF:000013">
    <property type="entry name" value="Uncharacterized Nudix hydrolase NudL"/>
    <property type="match status" value="1"/>
</dbReference>
<dbReference type="Gene3D" id="3.90.79.10">
    <property type="entry name" value="Nucleoside Triphosphate Pyrophosphohydrolase"/>
    <property type="match status" value="1"/>
</dbReference>
<dbReference type="HAMAP" id="MF_01592">
    <property type="entry name" value="Nudix_NudL"/>
    <property type="match status" value="1"/>
</dbReference>
<dbReference type="InterPro" id="IPR045121">
    <property type="entry name" value="CoAse"/>
</dbReference>
<dbReference type="InterPro" id="IPR015797">
    <property type="entry name" value="NUDIX_hydrolase-like_dom_sf"/>
</dbReference>
<dbReference type="InterPro" id="IPR000086">
    <property type="entry name" value="NUDIX_hydrolase_dom"/>
</dbReference>
<dbReference type="InterPro" id="IPR000059">
    <property type="entry name" value="NUDIX_hydrolase_NudL_CS"/>
</dbReference>
<dbReference type="InterPro" id="IPR023735">
    <property type="entry name" value="Nudix_NudL"/>
</dbReference>
<dbReference type="NCBIfam" id="NF007980">
    <property type="entry name" value="PRK10707.1"/>
    <property type="match status" value="1"/>
</dbReference>
<dbReference type="PANTHER" id="PTHR12992:SF11">
    <property type="entry name" value="MITOCHONDRIAL COENZYME A DIPHOSPHATASE NUDT8"/>
    <property type="match status" value="1"/>
</dbReference>
<dbReference type="PANTHER" id="PTHR12992">
    <property type="entry name" value="NUDIX HYDROLASE"/>
    <property type="match status" value="1"/>
</dbReference>
<dbReference type="Pfam" id="PF00293">
    <property type="entry name" value="NUDIX"/>
    <property type="match status" value="1"/>
</dbReference>
<dbReference type="SUPFAM" id="SSF55811">
    <property type="entry name" value="Nudix"/>
    <property type="match status" value="1"/>
</dbReference>
<dbReference type="PROSITE" id="PS51462">
    <property type="entry name" value="NUDIX"/>
    <property type="match status" value="1"/>
</dbReference>
<dbReference type="PROSITE" id="PS01293">
    <property type="entry name" value="NUDIX_COA"/>
    <property type="match status" value="1"/>
</dbReference>
<feature type="chain" id="PRO_0000315575" description="Uncharacterized Nudix hydrolase NudL">
    <location>
        <begin position="1"/>
        <end position="192"/>
    </location>
</feature>
<feature type="domain" description="Nudix hydrolase" evidence="1">
    <location>
        <begin position="29"/>
        <end position="160"/>
    </location>
</feature>
<feature type="short sequence motif" description="Nudix box">
    <location>
        <begin position="67"/>
        <end position="89"/>
    </location>
</feature>
<feature type="binding site" evidence="1">
    <location>
        <position position="83"/>
    </location>
    <ligand>
        <name>Mg(2+)</name>
        <dbReference type="ChEBI" id="CHEBI:18420"/>
    </ligand>
</feature>
<feature type="binding site" evidence="1">
    <location>
        <position position="87"/>
    </location>
    <ligand>
        <name>Mg(2+)</name>
        <dbReference type="ChEBI" id="CHEBI:18420"/>
    </ligand>
</feature>
<name>NUDL_ECOK1</name>
<evidence type="ECO:0000255" key="1">
    <source>
        <dbReference type="HAMAP-Rule" id="MF_01592"/>
    </source>
</evidence>
<keyword id="KW-0378">Hydrolase</keyword>
<keyword id="KW-0460">Magnesium</keyword>
<keyword id="KW-0464">Manganese</keyword>
<keyword id="KW-0479">Metal-binding</keyword>
<keyword id="KW-1185">Reference proteome</keyword>
<organism>
    <name type="scientific">Escherichia coli O1:K1 / APEC</name>
    <dbReference type="NCBI Taxonomy" id="405955"/>
    <lineage>
        <taxon>Bacteria</taxon>
        <taxon>Pseudomonadati</taxon>
        <taxon>Pseudomonadota</taxon>
        <taxon>Gammaproteobacteria</taxon>
        <taxon>Enterobacterales</taxon>
        <taxon>Enterobacteriaceae</taxon>
        <taxon>Escherichia</taxon>
    </lineage>
</organism>